<proteinExistence type="inferred from homology"/>
<comment type="subcellular location">
    <subcellularLocation>
        <location>Plastid</location>
        <location>Chloroplast</location>
    </subcellularLocation>
</comment>
<comment type="similarity">
    <text evidence="1">Belongs to the universal ribosomal protein uS2 family.</text>
</comment>
<organism>
    <name type="scientific">Chaetosphaeridium globosum</name>
    <name type="common">Charophycean green alga</name>
    <name type="synonym">Herposteiron globosum</name>
    <dbReference type="NCBI Taxonomy" id="96477"/>
    <lineage>
        <taxon>Eukaryota</taxon>
        <taxon>Viridiplantae</taxon>
        <taxon>Streptophyta</taxon>
        <taxon>Coleochaetophyceae</taxon>
        <taxon>Coleochaetales</taxon>
        <taxon>Chaetosphaeridiaceae</taxon>
        <taxon>Chaetosphaeridium</taxon>
    </lineage>
</organism>
<evidence type="ECO:0000305" key="1"/>
<reference key="1">
    <citation type="journal article" date="2002" name="Proc. Natl. Acad. Sci. U.S.A.">
        <title>The chloroplast and mitochondrial genome sequences of the charophyte Chaetosphaeridium globosum: insights into the timing of the events that restructured organelle DNAs within the green algal lineage that led to land plants.</title>
        <authorList>
            <person name="Turmel M."/>
            <person name="Otis C."/>
            <person name="Lemieux C."/>
        </authorList>
    </citation>
    <scope>NUCLEOTIDE SEQUENCE [LARGE SCALE GENOMIC DNA]</scope>
    <source>
        <strain>M1311</strain>
    </source>
</reference>
<accession>Q8MA09</accession>
<feature type="chain" id="PRO_0000134290" description="Small ribosomal subunit protein uS2c">
    <location>
        <begin position="1"/>
        <end position="236"/>
    </location>
</feature>
<name>RR2_CHAGL</name>
<sequence length="236" mass="26961">MNSWNINLEDMMEAGVYLGHQARKWNPKMAPYIFAERKGIHIINLTQTARFLTEACDLLFNTAKNGEQFLIVGTKYQAADLVALTAKKSRCHYVNQKWLGGMLTNWTTIKKRLKKLQELESLESINGFDRFPKKEASNLKRQLAQLRKYLGGIRHMTKLPDIVIIIDQQHELTALKECLILGIPTICFVDTDCDPDLTDIPIPANDDSRASIQWILNKLTNSIREGRAFSKNDSIN</sequence>
<keyword id="KW-0150">Chloroplast</keyword>
<keyword id="KW-0934">Plastid</keyword>
<keyword id="KW-0687">Ribonucleoprotein</keyword>
<keyword id="KW-0689">Ribosomal protein</keyword>
<gene>
    <name type="primary">rps2</name>
</gene>
<protein>
    <recommendedName>
        <fullName evidence="1">Small ribosomal subunit protein uS2c</fullName>
    </recommendedName>
    <alternativeName>
        <fullName>30S ribosomal protein S2, chloroplastic</fullName>
    </alternativeName>
</protein>
<dbReference type="EMBL" id="AF494278">
    <property type="protein sequence ID" value="AAM96575.1"/>
    <property type="molecule type" value="Genomic_DNA"/>
</dbReference>
<dbReference type="RefSeq" id="NP_683777.1">
    <property type="nucleotide sequence ID" value="NC_004115.1"/>
</dbReference>
<dbReference type="SMR" id="Q8MA09"/>
<dbReference type="GeneID" id="860731"/>
<dbReference type="GO" id="GO:0009507">
    <property type="term" value="C:chloroplast"/>
    <property type="evidence" value="ECO:0007669"/>
    <property type="project" value="UniProtKB-SubCell"/>
</dbReference>
<dbReference type="GO" id="GO:0005763">
    <property type="term" value="C:mitochondrial small ribosomal subunit"/>
    <property type="evidence" value="ECO:0007669"/>
    <property type="project" value="TreeGrafter"/>
</dbReference>
<dbReference type="GO" id="GO:0003735">
    <property type="term" value="F:structural constituent of ribosome"/>
    <property type="evidence" value="ECO:0007669"/>
    <property type="project" value="InterPro"/>
</dbReference>
<dbReference type="GO" id="GO:0006412">
    <property type="term" value="P:translation"/>
    <property type="evidence" value="ECO:0007669"/>
    <property type="project" value="UniProtKB-UniRule"/>
</dbReference>
<dbReference type="CDD" id="cd01425">
    <property type="entry name" value="RPS2"/>
    <property type="match status" value="1"/>
</dbReference>
<dbReference type="FunFam" id="1.10.287.610:FF:000001">
    <property type="entry name" value="30S ribosomal protein S2"/>
    <property type="match status" value="1"/>
</dbReference>
<dbReference type="Gene3D" id="3.40.50.10490">
    <property type="entry name" value="Glucose-6-phosphate isomerase like protein, domain 1"/>
    <property type="match status" value="1"/>
</dbReference>
<dbReference type="Gene3D" id="1.10.287.610">
    <property type="entry name" value="Helix hairpin bin"/>
    <property type="match status" value="1"/>
</dbReference>
<dbReference type="HAMAP" id="MF_00291_B">
    <property type="entry name" value="Ribosomal_uS2_B"/>
    <property type="match status" value="1"/>
</dbReference>
<dbReference type="InterPro" id="IPR001865">
    <property type="entry name" value="Ribosomal_uS2"/>
</dbReference>
<dbReference type="InterPro" id="IPR005706">
    <property type="entry name" value="Ribosomal_uS2_bac/mit/plastid"/>
</dbReference>
<dbReference type="InterPro" id="IPR018130">
    <property type="entry name" value="Ribosomal_uS2_CS"/>
</dbReference>
<dbReference type="InterPro" id="IPR023591">
    <property type="entry name" value="Ribosomal_uS2_flav_dom_sf"/>
</dbReference>
<dbReference type="NCBIfam" id="TIGR01011">
    <property type="entry name" value="rpsB_bact"/>
    <property type="match status" value="1"/>
</dbReference>
<dbReference type="PANTHER" id="PTHR12534">
    <property type="entry name" value="30S RIBOSOMAL PROTEIN S2 PROKARYOTIC AND ORGANELLAR"/>
    <property type="match status" value="1"/>
</dbReference>
<dbReference type="PANTHER" id="PTHR12534:SF0">
    <property type="entry name" value="SMALL RIBOSOMAL SUBUNIT PROTEIN US2M"/>
    <property type="match status" value="1"/>
</dbReference>
<dbReference type="Pfam" id="PF00318">
    <property type="entry name" value="Ribosomal_S2"/>
    <property type="match status" value="1"/>
</dbReference>
<dbReference type="PRINTS" id="PR00395">
    <property type="entry name" value="RIBOSOMALS2"/>
</dbReference>
<dbReference type="SUPFAM" id="SSF52313">
    <property type="entry name" value="Ribosomal protein S2"/>
    <property type="match status" value="1"/>
</dbReference>
<dbReference type="PROSITE" id="PS00962">
    <property type="entry name" value="RIBOSOMAL_S2_1"/>
    <property type="match status" value="1"/>
</dbReference>
<dbReference type="PROSITE" id="PS00963">
    <property type="entry name" value="RIBOSOMAL_S2_2"/>
    <property type="match status" value="1"/>
</dbReference>
<geneLocation type="chloroplast"/>